<protein>
    <recommendedName>
        <fullName>Lamin-B receptor</fullName>
    </recommendedName>
    <alternativeName>
        <fullName>dLBR</fullName>
    </alternativeName>
</protein>
<name>LBR_DROME</name>
<proteinExistence type="evidence at protein level"/>
<gene>
    <name evidence="14" type="primary">LBR</name>
    <name type="ORF">CG17952</name>
</gene>
<dbReference type="EMBL" id="AJ606680">
    <property type="protein sequence ID" value="CAE54809.1"/>
    <property type="molecule type" value="mRNA"/>
</dbReference>
<dbReference type="EMBL" id="AE013599">
    <property type="protein sequence ID" value="AAM71015.1"/>
    <property type="molecule type" value="Genomic_DNA"/>
</dbReference>
<dbReference type="EMBL" id="AE013599">
    <property type="protein sequence ID" value="AAF46760.2"/>
    <property type="molecule type" value="Genomic_DNA"/>
</dbReference>
<dbReference type="EMBL" id="AY070562">
    <property type="protein sequence ID" value="AAL48033.1"/>
    <property type="molecule type" value="mRNA"/>
</dbReference>
<dbReference type="EMBL" id="BT023819">
    <property type="protein sequence ID" value="AAZ86740.1"/>
    <property type="molecule type" value="mRNA"/>
</dbReference>
<dbReference type="RefSeq" id="NP_611608.1">
    <molecule id="Q8MLV1-2"/>
    <property type="nucleotide sequence ID" value="NM_137764.3"/>
</dbReference>
<dbReference type="RefSeq" id="NP_726114.1">
    <molecule id="Q8MLV1-1"/>
    <property type="nucleotide sequence ID" value="NM_166484.2"/>
</dbReference>
<dbReference type="RefSeq" id="NP_726115.1">
    <molecule id="Q8MLV1-2"/>
    <property type="nucleotide sequence ID" value="NM_166485.2"/>
</dbReference>
<dbReference type="SMR" id="Q8MLV1"/>
<dbReference type="BioGRID" id="63107">
    <property type="interactions" value="8"/>
</dbReference>
<dbReference type="FunCoup" id="Q8MLV1">
    <property type="interactions" value="597"/>
</dbReference>
<dbReference type="IntAct" id="Q8MLV1">
    <property type="interactions" value="4"/>
</dbReference>
<dbReference type="MINT" id="Q8MLV1"/>
<dbReference type="STRING" id="7227.FBpp0071630"/>
<dbReference type="TCDB" id="9.B.115.4.1">
    <property type="family name" value="the steroid 5alpha-reductase/lamin b receptor (lbr) family"/>
</dbReference>
<dbReference type="GlyGen" id="Q8MLV1">
    <property type="glycosylation" value="1 site, 1 O-linked glycan (1 site)"/>
</dbReference>
<dbReference type="iPTMnet" id="Q8MLV1"/>
<dbReference type="PaxDb" id="7227-FBpp0071630"/>
<dbReference type="DNASU" id="37482"/>
<dbReference type="EnsemblMetazoa" id="FBtr0071711">
    <molecule id="Q8MLV1-2"/>
    <property type="protein sequence ID" value="FBpp0071628"/>
    <property type="gene ID" value="FBgn0034657"/>
</dbReference>
<dbReference type="EnsemblMetazoa" id="FBtr0071712">
    <molecule id="Q8MLV1-2"/>
    <property type="protein sequence ID" value="FBpp0071629"/>
    <property type="gene ID" value="FBgn0034657"/>
</dbReference>
<dbReference type="EnsemblMetazoa" id="FBtr0071713">
    <molecule id="Q8MLV1-1"/>
    <property type="protein sequence ID" value="FBpp0071630"/>
    <property type="gene ID" value="FBgn0034657"/>
</dbReference>
<dbReference type="GeneID" id="37482"/>
<dbReference type="KEGG" id="dme:Dmel_CG17952"/>
<dbReference type="AGR" id="FB:FBgn0034657"/>
<dbReference type="CTD" id="3930"/>
<dbReference type="FlyBase" id="FBgn0034657">
    <property type="gene designation" value="LBR"/>
</dbReference>
<dbReference type="VEuPathDB" id="VectorBase:FBgn0034657"/>
<dbReference type="eggNOG" id="KOG1435">
    <property type="taxonomic scope" value="Eukaryota"/>
</dbReference>
<dbReference type="GeneTree" id="ENSGT00390000000417"/>
<dbReference type="HOGENOM" id="CLU_392461_0_0_1"/>
<dbReference type="InParanoid" id="Q8MLV1"/>
<dbReference type="OMA" id="HSSWHRY"/>
<dbReference type="OrthoDB" id="5326588at2759"/>
<dbReference type="PhylomeDB" id="Q8MLV1"/>
<dbReference type="Reactome" id="R-DME-191273">
    <property type="pathway name" value="Cholesterol biosynthesis"/>
</dbReference>
<dbReference type="BioGRID-ORCS" id="37482">
    <property type="hits" value="0 hits in 3 CRISPR screens"/>
</dbReference>
<dbReference type="ChiTaRS" id="LBR">
    <property type="organism name" value="fly"/>
</dbReference>
<dbReference type="GenomeRNAi" id="37482"/>
<dbReference type="PRO" id="PR:Q8MLV1"/>
<dbReference type="Proteomes" id="UP000000803">
    <property type="component" value="Chromosome 2R"/>
</dbReference>
<dbReference type="Bgee" id="FBgn0034657">
    <property type="expression patterns" value="Expressed in posterior terminal follicle cell in ovary and 53 other cell types or tissues"/>
</dbReference>
<dbReference type="GO" id="GO:0005635">
    <property type="term" value="C:nuclear envelope"/>
    <property type="evidence" value="ECO:0000314"/>
    <property type="project" value="FlyBase"/>
</dbReference>
<dbReference type="GO" id="GO:0005637">
    <property type="term" value="C:nuclear inner membrane"/>
    <property type="evidence" value="ECO:0000314"/>
    <property type="project" value="UniProtKB"/>
</dbReference>
<dbReference type="GO" id="GO:0003682">
    <property type="term" value="F:chromatin binding"/>
    <property type="evidence" value="ECO:0000314"/>
    <property type="project" value="UniProtKB"/>
</dbReference>
<dbReference type="GO" id="GO:0003677">
    <property type="term" value="F:DNA binding"/>
    <property type="evidence" value="ECO:0007669"/>
    <property type="project" value="UniProtKB-KW"/>
</dbReference>
<dbReference type="GO" id="GO:0005521">
    <property type="term" value="F:lamin binding"/>
    <property type="evidence" value="ECO:0000353"/>
    <property type="project" value="UniProtKB"/>
</dbReference>
<dbReference type="GO" id="GO:0006997">
    <property type="term" value="P:nucleus organization"/>
    <property type="evidence" value="ECO:0000305"/>
    <property type="project" value="UniProtKB"/>
</dbReference>
<dbReference type="GO" id="GO:0016126">
    <property type="term" value="P:sterol biosynthetic process"/>
    <property type="evidence" value="ECO:0007669"/>
    <property type="project" value="InterPro"/>
</dbReference>
<dbReference type="FunFam" id="1.20.120.1630:FF:000013">
    <property type="entry name" value="Lamin-B receptor-like Protein"/>
    <property type="match status" value="1"/>
</dbReference>
<dbReference type="Gene3D" id="1.20.120.1630">
    <property type="match status" value="1"/>
</dbReference>
<dbReference type="InterPro" id="IPR001171">
    <property type="entry name" value="ERG24_DHCR-like"/>
</dbReference>
<dbReference type="PANTHER" id="PTHR21257">
    <property type="entry name" value="DELTA(14)-STEROL REDUCTASE"/>
    <property type="match status" value="1"/>
</dbReference>
<dbReference type="PANTHER" id="PTHR21257:SF55">
    <property type="entry name" value="DELTA(14)-STEROL REDUCTASE LBR"/>
    <property type="match status" value="1"/>
</dbReference>
<dbReference type="Pfam" id="PF01222">
    <property type="entry name" value="ERG4_ERG24"/>
    <property type="match status" value="2"/>
</dbReference>
<sequence>MQHSPSTTTDHIHFAARFFDRNSYTMDRRLRRPRRTEDVSSGPLLAQSKQPSLLPVTRRTGSVTAAGATATATATAGPATRTRASPSRNKVVAPPSPDLGPRTRRSSRPRSSVGPLTGSGSGSSLPIKAAIKARTPIPEVSEVSSPIRLSTSNLPMTLTTNTSSGAPNKAFNTSSVNSGNSFSRTTTSSTTTTTERIEIRAEGDGEVDTDSIRKRITERLRRSVSKTISNLAGTPVTNTEEGSRYSRSVSRSVYDDEKSSKRSYSTGEEDIDEEDELEEDQFRSFNVTRKSATPAEISCRQLKAPREFGGWLGAFLFLLLLPTAVYYLTWSCTARNACQFKHLNLGILLDVNYLTRQVFQPRVVGAFAAYQVVVFLLVALLPGRRVHLTRETYKFNCLAVSLTLLIASGVAEYLKYPVVTFVLRHYLRFCIFGLVGAFVAAAWSYWLVDTAKYNVLRQTLTNDYGRTGSFVVDFALGRQLNPKWLGRVDWKQFQYRLSLVTTLIYATCYIYQTLVWPQKPQLGEQEGYLYQAKYYWNNVNYDPATLFSASCLLFYVLDAIIFEHHLSSSFELQHEGYGCLLLLRYAATPYLLTAVTKYFYEQRVPISCWYAPLAVAALLSLGLLVKRFSCAYKYKYRLNSQSPIFANIETIHTYQGSRLLLSGMWGWVRQPNYLGDIVALLALAAPMALRPAWPPVLGLSLIILLLLHRATRANARNQARYHSSWQRYSTQVRSYILPRVY</sequence>
<comment type="function">
    <text evidence="5">Anchors the lamina and the heterochromatin to the inner nuclear membrane.</text>
</comment>
<comment type="subunit">
    <text evidence="5">Interacts directly with LAM.</text>
</comment>
<comment type="subcellular location">
    <subcellularLocation>
        <location evidence="5">Nucleus inner membrane</location>
        <topology evidence="5">Multi-pass membrane protein</topology>
        <orientation evidence="5">Nucleoplasmic side</orientation>
    </subcellularLocation>
</comment>
<comment type="alternative products">
    <event type="alternative splicing"/>
    <isoform>
        <id>Q8MLV1-1</id>
        <name evidence="5">C</name>
        <sequence type="displayed"/>
    </isoform>
    <isoform>
        <id>Q8MLV1-2</id>
        <name evidence="8">A</name>
        <name evidence="8">B</name>
        <sequence type="described" ref="VSP_051851"/>
    </isoform>
</comment>
<comment type="similarity">
    <text evidence="1">Belongs to the ERG4/ERG24 family.</text>
</comment>
<comment type="caution">
    <text evidence="9">Unlike other members of this family, it does not possess sterol C14 reductase activity.</text>
</comment>
<evidence type="ECO:0000255" key="1"/>
<evidence type="ECO:0000256" key="2">
    <source>
        <dbReference type="SAM" id="MobiDB-lite"/>
    </source>
</evidence>
<evidence type="ECO:0000269" key="3">
    <source>
    </source>
</evidence>
<evidence type="ECO:0000269" key="4">
    <source>
    </source>
</evidence>
<evidence type="ECO:0000269" key="5">
    <source>
    </source>
</evidence>
<evidence type="ECO:0000269" key="6">
    <source>
    </source>
</evidence>
<evidence type="ECO:0000303" key="7">
    <source>
    </source>
</evidence>
<evidence type="ECO:0000303" key="8">
    <source>
    </source>
</evidence>
<evidence type="ECO:0000305" key="9"/>
<evidence type="ECO:0000312" key="10">
    <source>
        <dbReference type="EMBL" id="AAL48033.1"/>
    </source>
</evidence>
<evidence type="ECO:0000312" key="11">
    <source>
        <dbReference type="EMBL" id="AAM71015.1"/>
    </source>
</evidence>
<evidence type="ECO:0000312" key="12">
    <source>
        <dbReference type="EMBL" id="AAZ86740.1"/>
    </source>
</evidence>
<evidence type="ECO:0000312" key="13">
    <source>
        <dbReference type="EMBL" id="CAE54809.1"/>
    </source>
</evidence>
<evidence type="ECO:0000312" key="14">
    <source>
        <dbReference type="FlyBase" id="FBgn0034657"/>
    </source>
</evidence>
<accession>Q8MLV1</accession>
<accession>Q0E8Z1</accession>
<accession>Q709R7</accession>
<accession>Q9W2D2</accession>
<organism>
    <name type="scientific">Drosophila melanogaster</name>
    <name type="common">Fruit fly</name>
    <dbReference type="NCBI Taxonomy" id="7227"/>
    <lineage>
        <taxon>Eukaryota</taxon>
        <taxon>Metazoa</taxon>
        <taxon>Ecdysozoa</taxon>
        <taxon>Arthropoda</taxon>
        <taxon>Hexapoda</taxon>
        <taxon>Insecta</taxon>
        <taxon>Pterygota</taxon>
        <taxon>Neoptera</taxon>
        <taxon>Endopterygota</taxon>
        <taxon>Diptera</taxon>
        <taxon>Brachycera</taxon>
        <taxon>Muscomorpha</taxon>
        <taxon>Ephydroidea</taxon>
        <taxon>Drosophilidae</taxon>
        <taxon>Drosophila</taxon>
        <taxon>Sophophora</taxon>
    </lineage>
</organism>
<feature type="chain" id="PRO_0000207512" description="Lamin-B receptor">
    <location>
        <begin position="1"/>
        <end position="741"/>
    </location>
</feature>
<feature type="transmembrane region" description="Helical" evidence="1">
    <location>
        <begin position="308"/>
        <end position="328"/>
    </location>
</feature>
<feature type="transmembrane region" description="Helical" evidence="1">
    <location>
        <begin position="363"/>
        <end position="383"/>
    </location>
</feature>
<feature type="transmembrane region" description="Helical" evidence="1">
    <location>
        <begin position="402"/>
        <end position="422"/>
    </location>
</feature>
<feature type="transmembrane region" description="Helical" evidence="1">
    <location>
        <begin position="429"/>
        <end position="449"/>
    </location>
</feature>
<feature type="transmembrane region" description="Helical" evidence="1">
    <location>
        <begin position="497"/>
        <end position="517"/>
    </location>
</feature>
<feature type="transmembrane region" description="Helical" evidence="1">
    <location>
        <begin position="543"/>
        <end position="563"/>
    </location>
</feature>
<feature type="transmembrane region" description="Helical" evidence="1">
    <location>
        <begin position="577"/>
        <end position="599"/>
    </location>
</feature>
<feature type="transmembrane region" description="Helical" evidence="1">
    <location>
        <begin position="604"/>
        <end position="624"/>
    </location>
</feature>
<feature type="transmembrane region" description="Helical" evidence="1">
    <location>
        <begin position="687"/>
        <end position="707"/>
    </location>
</feature>
<feature type="region of interest" description="Disordered" evidence="2">
    <location>
        <begin position="29"/>
        <end position="126"/>
    </location>
</feature>
<feature type="region of interest" description="Disordered" evidence="2">
    <location>
        <begin position="160"/>
        <end position="194"/>
    </location>
</feature>
<feature type="region of interest" description="Disordered" evidence="2">
    <location>
        <begin position="231"/>
        <end position="277"/>
    </location>
</feature>
<feature type="compositionally biased region" description="Low complexity" evidence="2">
    <location>
        <begin position="57"/>
        <end position="84"/>
    </location>
</feature>
<feature type="compositionally biased region" description="Low complexity" evidence="2">
    <location>
        <begin position="109"/>
        <end position="126"/>
    </location>
</feature>
<feature type="compositionally biased region" description="Polar residues" evidence="2">
    <location>
        <begin position="160"/>
        <end position="184"/>
    </location>
</feature>
<feature type="compositionally biased region" description="Low complexity" evidence="2">
    <location>
        <begin position="185"/>
        <end position="194"/>
    </location>
</feature>
<feature type="compositionally biased region" description="Polar residues" evidence="2">
    <location>
        <begin position="231"/>
        <end position="240"/>
    </location>
</feature>
<feature type="compositionally biased region" description="Acidic residues" evidence="2">
    <location>
        <begin position="267"/>
        <end position="277"/>
    </location>
</feature>
<feature type="modified residue" description="Phosphoserine" evidence="6">
    <location>
        <position position="111"/>
    </location>
</feature>
<feature type="modified residue" description="Phosphothreonine" evidence="6">
    <location>
        <position position="135"/>
    </location>
</feature>
<feature type="modified residue" description="Phosphoserine" evidence="6">
    <location>
        <position position="144"/>
    </location>
</feature>
<feature type="modified residue" description="Phosphoserine" evidence="6">
    <location>
        <position position="223"/>
    </location>
</feature>
<feature type="modified residue" description="Phosphoserine" evidence="6">
    <location>
        <position position="225"/>
    </location>
</feature>
<feature type="modified residue" description="Phosphothreonine" evidence="6">
    <location>
        <position position="234"/>
    </location>
</feature>
<feature type="modified residue" description="Phosphothreonine" evidence="6">
    <location>
        <position position="237"/>
    </location>
</feature>
<feature type="modified residue" description="Phosphoserine" evidence="6">
    <location>
        <position position="243"/>
    </location>
</feature>
<feature type="modified residue" description="Phosphoserine" evidence="6">
    <location>
        <position position="246"/>
    </location>
</feature>
<feature type="modified residue" description="Phosphoserine" evidence="6">
    <location>
        <position position="248"/>
    </location>
</feature>
<feature type="modified residue" description="Phosphoserine" evidence="6">
    <location>
        <position position="250"/>
    </location>
</feature>
<feature type="modified residue" description="Phosphoserine" evidence="6">
    <location>
        <position position="263"/>
    </location>
</feature>
<feature type="modified residue" description="Phosphothreonine" evidence="6">
    <location>
        <position position="266"/>
    </location>
</feature>
<feature type="modified residue" description="Phosphoserine" evidence="6">
    <location>
        <position position="284"/>
    </location>
</feature>
<feature type="modified residue" description="Phosphothreonine" evidence="6">
    <location>
        <position position="288"/>
    </location>
</feature>
<feature type="modified residue" description="Phosphoserine" evidence="6">
    <location>
        <position position="291"/>
    </location>
</feature>
<feature type="modified residue" description="Phosphothreonine" evidence="6">
    <location>
        <position position="293"/>
    </location>
</feature>
<feature type="modified residue" description="Phosphoserine" evidence="6">
    <location>
        <position position="298"/>
    </location>
</feature>
<feature type="modified residue" description="Phosphoserine" evidence="6">
    <location>
        <position position="640"/>
    </location>
</feature>
<feature type="modified residue" description="Phosphoserine" evidence="6">
    <location>
        <position position="642"/>
    </location>
</feature>
<feature type="splice variant" id="VSP_051851" description="In isoform A." evidence="7 8">
    <location>
        <begin position="1"/>
        <end position="25"/>
    </location>
</feature>
<feature type="sequence conflict" description="In Ref. 1 and 5." evidence="9" ref="1 5">
    <original>S</original>
    <variation>T</variation>
    <location>
        <position position="52"/>
    </location>
</feature>
<feature type="sequence conflict" description="In Ref. 1 and 5." evidence="9" ref="1 5">
    <original>G</original>
    <variation>A</variation>
    <location>
        <position position="67"/>
    </location>
</feature>
<feature type="sequence conflict" description="In Ref. 1 and 5." evidence="9" ref="1 5">
    <original>F</original>
    <variation>L</variation>
    <location>
        <position position="317"/>
    </location>
</feature>
<feature type="sequence conflict" description="In Ref. 1 and 5." evidence="9" ref="1 5">
    <original>S</original>
    <variation>G</variation>
    <location>
        <position position="408"/>
    </location>
</feature>
<reference evidence="9 13" key="1">
    <citation type="journal article" date="2004" name="J. Cell Sci.">
        <title>The lamin B receptor of Drosophila melanogaster.</title>
        <authorList>
            <person name="Wagner N."/>
            <person name="Weber D."/>
            <person name="Seitz S."/>
            <person name="Krohne G."/>
        </authorList>
    </citation>
    <scope>NUCLEOTIDE SEQUENCE [MRNA] (ISOFORM C)</scope>
    <scope>FUNCTION</scope>
    <scope>SUBCELLULAR LOCATION</scope>
    <scope>INTERACTION WITH LAM</scope>
</reference>
<reference evidence="11" key="2">
    <citation type="journal article" date="2000" name="Science">
        <title>The genome sequence of Drosophila melanogaster.</title>
        <authorList>
            <person name="Adams M.D."/>
            <person name="Celniker S.E."/>
            <person name="Holt R.A."/>
            <person name="Evans C.A."/>
            <person name="Gocayne J.D."/>
            <person name="Amanatides P.G."/>
            <person name="Scherer S.E."/>
            <person name="Li P.W."/>
            <person name="Hoskins R.A."/>
            <person name="Galle R.F."/>
            <person name="George R.A."/>
            <person name="Lewis S.E."/>
            <person name="Richards S."/>
            <person name="Ashburner M."/>
            <person name="Henderson S.N."/>
            <person name="Sutton G.G."/>
            <person name="Wortman J.R."/>
            <person name="Yandell M.D."/>
            <person name="Zhang Q."/>
            <person name="Chen L.X."/>
            <person name="Brandon R.C."/>
            <person name="Rogers Y.-H.C."/>
            <person name="Blazej R.G."/>
            <person name="Champe M."/>
            <person name="Pfeiffer B.D."/>
            <person name="Wan K.H."/>
            <person name="Doyle C."/>
            <person name="Baxter E.G."/>
            <person name="Helt G."/>
            <person name="Nelson C.R."/>
            <person name="Miklos G.L.G."/>
            <person name="Abril J.F."/>
            <person name="Agbayani A."/>
            <person name="An H.-J."/>
            <person name="Andrews-Pfannkoch C."/>
            <person name="Baldwin D."/>
            <person name="Ballew R.M."/>
            <person name="Basu A."/>
            <person name="Baxendale J."/>
            <person name="Bayraktaroglu L."/>
            <person name="Beasley E.M."/>
            <person name="Beeson K.Y."/>
            <person name="Benos P.V."/>
            <person name="Berman B.P."/>
            <person name="Bhandari D."/>
            <person name="Bolshakov S."/>
            <person name="Borkova D."/>
            <person name="Botchan M.R."/>
            <person name="Bouck J."/>
            <person name="Brokstein P."/>
            <person name="Brottier P."/>
            <person name="Burtis K.C."/>
            <person name="Busam D.A."/>
            <person name="Butler H."/>
            <person name="Cadieu E."/>
            <person name="Center A."/>
            <person name="Chandra I."/>
            <person name="Cherry J.M."/>
            <person name="Cawley S."/>
            <person name="Dahlke C."/>
            <person name="Davenport L.B."/>
            <person name="Davies P."/>
            <person name="de Pablos B."/>
            <person name="Delcher A."/>
            <person name="Deng Z."/>
            <person name="Mays A.D."/>
            <person name="Dew I."/>
            <person name="Dietz S.M."/>
            <person name="Dodson K."/>
            <person name="Doup L.E."/>
            <person name="Downes M."/>
            <person name="Dugan-Rocha S."/>
            <person name="Dunkov B.C."/>
            <person name="Dunn P."/>
            <person name="Durbin K.J."/>
            <person name="Evangelista C.C."/>
            <person name="Ferraz C."/>
            <person name="Ferriera S."/>
            <person name="Fleischmann W."/>
            <person name="Fosler C."/>
            <person name="Gabrielian A.E."/>
            <person name="Garg N.S."/>
            <person name="Gelbart W.M."/>
            <person name="Glasser K."/>
            <person name="Glodek A."/>
            <person name="Gong F."/>
            <person name="Gorrell J.H."/>
            <person name="Gu Z."/>
            <person name="Guan P."/>
            <person name="Harris M."/>
            <person name="Harris N.L."/>
            <person name="Harvey D.A."/>
            <person name="Heiman T.J."/>
            <person name="Hernandez J.R."/>
            <person name="Houck J."/>
            <person name="Hostin D."/>
            <person name="Houston K.A."/>
            <person name="Howland T.J."/>
            <person name="Wei M.-H."/>
            <person name="Ibegwam C."/>
            <person name="Jalali M."/>
            <person name="Kalush F."/>
            <person name="Karpen G.H."/>
            <person name="Ke Z."/>
            <person name="Kennison J.A."/>
            <person name="Ketchum K.A."/>
            <person name="Kimmel B.E."/>
            <person name="Kodira C.D."/>
            <person name="Kraft C.L."/>
            <person name="Kravitz S."/>
            <person name="Kulp D."/>
            <person name="Lai Z."/>
            <person name="Lasko P."/>
            <person name="Lei Y."/>
            <person name="Levitsky A.A."/>
            <person name="Li J.H."/>
            <person name="Li Z."/>
            <person name="Liang Y."/>
            <person name="Lin X."/>
            <person name="Liu X."/>
            <person name="Mattei B."/>
            <person name="McIntosh T.C."/>
            <person name="McLeod M.P."/>
            <person name="McPherson D."/>
            <person name="Merkulov G."/>
            <person name="Milshina N.V."/>
            <person name="Mobarry C."/>
            <person name="Morris J."/>
            <person name="Moshrefi A."/>
            <person name="Mount S.M."/>
            <person name="Moy M."/>
            <person name="Murphy B."/>
            <person name="Murphy L."/>
            <person name="Muzny D.M."/>
            <person name="Nelson D.L."/>
            <person name="Nelson D.R."/>
            <person name="Nelson K.A."/>
            <person name="Nixon K."/>
            <person name="Nusskern D.R."/>
            <person name="Pacleb J.M."/>
            <person name="Palazzolo M."/>
            <person name="Pittman G.S."/>
            <person name="Pan S."/>
            <person name="Pollard J."/>
            <person name="Puri V."/>
            <person name="Reese M.G."/>
            <person name="Reinert K."/>
            <person name="Remington K."/>
            <person name="Saunders R.D.C."/>
            <person name="Scheeler F."/>
            <person name="Shen H."/>
            <person name="Shue B.C."/>
            <person name="Siden-Kiamos I."/>
            <person name="Simpson M."/>
            <person name="Skupski M.P."/>
            <person name="Smith T.J."/>
            <person name="Spier E."/>
            <person name="Spradling A.C."/>
            <person name="Stapleton M."/>
            <person name="Strong R."/>
            <person name="Sun E."/>
            <person name="Svirskas R."/>
            <person name="Tector C."/>
            <person name="Turner R."/>
            <person name="Venter E."/>
            <person name="Wang A.H."/>
            <person name="Wang X."/>
            <person name="Wang Z.-Y."/>
            <person name="Wassarman D.A."/>
            <person name="Weinstock G.M."/>
            <person name="Weissenbach J."/>
            <person name="Williams S.M."/>
            <person name="Woodage T."/>
            <person name="Worley K.C."/>
            <person name="Wu D."/>
            <person name="Yang S."/>
            <person name="Yao Q.A."/>
            <person name="Ye J."/>
            <person name="Yeh R.-F."/>
            <person name="Zaveri J.S."/>
            <person name="Zhan M."/>
            <person name="Zhang G."/>
            <person name="Zhao Q."/>
            <person name="Zheng L."/>
            <person name="Zheng X.H."/>
            <person name="Zhong F.N."/>
            <person name="Zhong W."/>
            <person name="Zhou X."/>
            <person name="Zhu S.C."/>
            <person name="Zhu X."/>
            <person name="Smith H.O."/>
            <person name="Gibbs R.A."/>
            <person name="Myers E.W."/>
            <person name="Rubin G.M."/>
            <person name="Venter J.C."/>
        </authorList>
    </citation>
    <scope>NUCLEOTIDE SEQUENCE [LARGE SCALE GENOMIC DNA]</scope>
    <source>
        <strain evidence="3">Berkeley</strain>
    </source>
</reference>
<reference evidence="9 11" key="3">
    <citation type="journal article" date="2002" name="Genome Biol.">
        <title>Annotation of the Drosophila melanogaster euchromatic genome: a systematic review.</title>
        <authorList>
            <person name="Misra S."/>
            <person name="Crosby M.A."/>
            <person name="Mungall C.J."/>
            <person name="Matthews B.B."/>
            <person name="Campbell K.S."/>
            <person name="Hradecky P."/>
            <person name="Huang Y."/>
            <person name="Kaminker J.S."/>
            <person name="Millburn G.H."/>
            <person name="Prochnik S.E."/>
            <person name="Smith C.D."/>
            <person name="Tupy J.L."/>
            <person name="Whitfield E.J."/>
            <person name="Bayraktaroglu L."/>
            <person name="Berman B.P."/>
            <person name="Bettencourt B.R."/>
            <person name="Celniker S.E."/>
            <person name="de Grey A.D.N.J."/>
            <person name="Drysdale R.A."/>
            <person name="Harris N.L."/>
            <person name="Richter J."/>
            <person name="Russo S."/>
            <person name="Schroeder A.J."/>
            <person name="Shu S.Q."/>
            <person name="Stapleton M."/>
            <person name="Yamada C."/>
            <person name="Ashburner M."/>
            <person name="Gelbart W.M."/>
            <person name="Rubin G.M."/>
            <person name="Lewis S.E."/>
        </authorList>
    </citation>
    <scope>GENOME REANNOTATION</scope>
    <scope>ALTERNATIVE SPLICING</scope>
    <source>
        <strain>Berkeley</strain>
    </source>
</reference>
<reference evidence="9 10" key="4">
    <citation type="journal article" date="2002" name="Genome Biol.">
        <title>A Drosophila full-length cDNA resource.</title>
        <authorList>
            <person name="Stapleton M."/>
            <person name="Carlson J.W."/>
            <person name="Brokstein P."/>
            <person name="Yu C."/>
            <person name="Champe M."/>
            <person name="George R.A."/>
            <person name="Guarin H."/>
            <person name="Kronmiller B."/>
            <person name="Pacleb J.M."/>
            <person name="Park S."/>
            <person name="Wan K.H."/>
            <person name="Rubin G.M."/>
            <person name="Celniker S.E."/>
        </authorList>
    </citation>
    <scope>NUCLEOTIDE SEQUENCE [LARGE SCALE MRNA] (ISOFORM A)</scope>
    <source>
        <strain evidence="4">Berkeley</strain>
        <tissue evidence="4">Embryo</tissue>
    </source>
</reference>
<reference evidence="9 12" key="5">
    <citation type="submission" date="2005-08" db="EMBL/GenBank/DDBJ databases">
        <authorList>
            <person name="Stapleton M."/>
            <person name="Carlson J.W."/>
            <person name="Chavez C."/>
            <person name="Frise E."/>
            <person name="George R.A."/>
            <person name="Pacleb J.M."/>
            <person name="Park S."/>
            <person name="Wan K.H."/>
            <person name="Yu C."/>
            <person name="Celniker S.E."/>
        </authorList>
    </citation>
    <scope>NUCLEOTIDE SEQUENCE [LARGE SCALE MRNA] (ISOFORM C)</scope>
    <source>
        <strain evidence="4">Berkeley</strain>
        <tissue evidence="4">Embryo</tissue>
    </source>
</reference>
<reference key="6">
    <citation type="journal article" date="2008" name="J. Proteome Res.">
        <title>Phosphoproteome analysis of Drosophila melanogaster embryos.</title>
        <authorList>
            <person name="Zhai B."/>
            <person name="Villen J."/>
            <person name="Beausoleil S.A."/>
            <person name="Mintseris J."/>
            <person name="Gygi S.P."/>
        </authorList>
    </citation>
    <scope>PHOSPHORYLATION [LARGE SCALE ANALYSIS] AT SER-111; THR-135; SER-144; SER-223; SER-225; THR-234; THR-237; SER-243; SER-246; SER-248; SER-250; SER-263; THR-266; SER-284; THR-288; SER-291; THR-293; SER-298; SER-640 AND SER-642</scope>
    <scope>IDENTIFICATION BY MASS SPECTROMETRY</scope>
    <source>
        <tissue>Embryo</tissue>
    </source>
</reference>
<keyword id="KW-0025">Alternative splicing</keyword>
<keyword id="KW-0238">DNA-binding</keyword>
<keyword id="KW-0472">Membrane</keyword>
<keyword id="KW-0539">Nucleus</keyword>
<keyword id="KW-0597">Phosphoprotein</keyword>
<keyword id="KW-0675">Receptor</keyword>
<keyword id="KW-1185">Reference proteome</keyword>
<keyword id="KW-0812">Transmembrane</keyword>
<keyword id="KW-1133">Transmembrane helix</keyword>